<protein>
    <recommendedName>
        <fullName evidence="1">Biotin synthase</fullName>
        <ecNumber evidence="1">2.8.1.6</ecNumber>
    </recommendedName>
</protein>
<dbReference type="EC" id="2.8.1.6" evidence="1"/>
<dbReference type="EMBL" id="CP000747">
    <property type="protein sequence ID" value="ACG76505.1"/>
    <property type="molecule type" value="Genomic_DNA"/>
</dbReference>
<dbReference type="RefSeq" id="WP_012520653.1">
    <property type="nucleotide sequence ID" value="NC_011144.1"/>
</dbReference>
<dbReference type="SMR" id="B4RBP5"/>
<dbReference type="STRING" id="450851.PHZ_c0091"/>
<dbReference type="KEGG" id="pzu:PHZ_c0091"/>
<dbReference type="eggNOG" id="COG0502">
    <property type="taxonomic scope" value="Bacteria"/>
</dbReference>
<dbReference type="HOGENOM" id="CLU_033172_1_2_5"/>
<dbReference type="OrthoDB" id="9786826at2"/>
<dbReference type="UniPathway" id="UPA00078">
    <property type="reaction ID" value="UER00162"/>
</dbReference>
<dbReference type="Proteomes" id="UP000001868">
    <property type="component" value="Chromosome"/>
</dbReference>
<dbReference type="GO" id="GO:0051537">
    <property type="term" value="F:2 iron, 2 sulfur cluster binding"/>
    <property type="evidence" value="ECO:0007669"/>
    <property type="project" value="UniProtKB-KW"/>
</dbReference>
<dbReference type="GO" id="GO:0051539">
    <property type="term" value="F:4 iron, 4 sulfur cluster binding"/>
    <property type="evidence" value="ECO:0007669"/>
    <property type="project" value="UniProtKB-KW"/>
</dbReference>
<dbReference type="GO" id="GO:0004076">
    <property type="term" value="F:biotin synthase activity"/>
    <property type="evidence" value="ECO:0007669"/>
    <property type="project" value="UniProtKB-UniRule"/>
</dbReference>
<dbReference type="GO" id="GO:0005506">
    <property type="term" value="F:iron ion binding"/>
    <property type="evidence" value="ECO:0007669"/>
    <property type="project" value="UniProtKB-UniRule"/>
</dbReference>
<dbReference type="GO" id="GO:0009102">
    <property type="term" value="P:biotin biosynthetic process"/>
    <property type="evidence" value="ECO:0007669"/>
    <property type="project" value="UniProtKB-UniRule"/>
</dbReference>
<dbReference type="CDD" id="cd01335">
    <property type="entry name" value="Radical_SAM"/>
    <property type="match status" value="1"/>
</dbReference>
<dbReference type="FunFam" id="3.20.20.70:FF:000011">
    <property type="entry name" value="Biotin synthase"/>
    <property type="match status" value="1"/>
</dbReference>
<dbReference type="Gene3D" id="3.20.20.70">
    <property type="entry name" value="Aldolase class I"/>
    <property type="match status" value="1"/>
</dbReference>
<dbReference type="HAMAP" id="MF_01694">
    <property type="entry name" value="BioB"/>
    <property type="match status" value="1"/>
</dbReference>
<dbReference type="InterPro" id="IPR013785">
    <property type="entry name" value="Aldolase_TIM"/>
</dbReference>
<dbReference type="InterPro" id="IPR010722">
    <property type="entry name" value="BATS_dom"/>
</dbReference>
<dbReference type="InterPro" id="IPR002684">
    <property type="entry name" value="Biotin_synth/BioAB"/>
</dbReference>
<dbReference type="InterPro" id="IPR024177">
    <property type="entry name" value="Biotin_synthase"/>
</dbReference>
<dbReference type="InterPro" id="IPR006638">
    <property type="entry name" value="Elp3/MiaA/NifB-like_rSAM"/>
</dbReference>
<dbReference type="InterPro" id="IPR007197">
    <property type="entry name" value="rSAM"/>
</dbReference>
<dbReference type="NCBIfam" id="TIGR00433">
    <property type="entry name" value="bioB"/>
    <property type="match status" value="1"/>
</dbReference>
<dbReference type="PANTHER" id="PTHR22976">
    <property type="entry name" value="BIOTIN SYNTHASE"/>
    <property type="match status" value="1"/>
</dbReference>
<dbReference type="PANTHER" id="PTHR22976:SF2">
    <property type="entry name" value="BIOTIN SYNTHASE, MITOCHONDRIAL"/>
    <property type="match status" value="1"/>
</dbReference>
<dbReference type="Pfam" id="PF06968">
    <property type="entry name" value="BATS"/>
    <property type="match status" value="1"/>
</dbReference>
<dbReference type="Pfam" id="PF04055">
    <property type="entry name" value="Radical_SAM"/>
    <property type="match status" value="1"/>
</dbReference>
<dbReference type="PIRSF" id="PIRSF001619">
    <property type="entry name" value="Biotin_synth"/>
    <property type="match status" value="1"/>
</dbReference>
<dbReference type="SFLD" id="SFLDG01060">
    <property type="entry name" value="BATS_domain_containing"/>
    <property type="match status" value="1"/>
</dbReference>
<dbReference type="SFLD" id="SFLDF00272">
    <property type="entry name" value="biotin_synthase"/>
    <property type="match status" value="1"/>
</dbReference>
<dbReference type="SMART" id="SM00876">
    <property type="entry name" value="BATS"/>
    <property type="match status" value="1"/>
</dbReference>
<dbReference type="SMART" id="SM00729">
    <property type="entry name" value="Elp3"/>
    <property type="match status" value="1"/>
</dbReference>
<dbReference type="SUPFAM" id="SSF102114">
    <property type="entry name" value="Radical SAM enzymes"/>
    <property type="match status" value="1"/>
</dbReference>
<dbReference type="PROSITE" id="PS51918">
    <property type="entry name" value="RADICAL_SAM"/>
    <property type="match status" value="1"/>
</dbReference>
<sequence length="331" mass="35754">MNAHVRPVDPANVDPAQPRHDWTLEEVEALFELPFTELVFRAAEVHRRWFDPTELQLSQLLSVKTGGCPEDCGYCAQSQKFKTGLAASKLMEAETVIAAAAEAKAGGAQRFCMGAAWRDLKDRDLPKVAAMISGVKALGLETCATLGMLTADQAKALKAAGLDYYNHNLDTGPDYYDKVVTTRTYQDRLDTLAAVRDAGMATCCGGIVGMGETRRDRAGLLHQLATLPAHPDSLPINDLMPIPGTPLGDSKAVDPLEFVRMIAVARIVCPKSMVRIAAGREHMTKELQALCFLAGANSIFVGARLLTTDNPEKTADEALLADLKMKPMAMA</sequence>
<name>BIOB_PHEZH</name>
<organism>
    <name type="scientific">Phenylobacterium zucineum (strain HLK1)</name>
    <dbReference type="NCBI Taxonomy" id="450851"/>
    <lineage>
        <taxon>Bacteria</taxon>
        <taxon>Pseudomonadati</taxon>
        <taxon>Pseudomonadota</taxon>
        <taxon>Alphaproteobacteria</taxon>
        <taxon>Caulobacterales</taxon>
        <taxon>Caulobacteraceae</taxon>
        <taxon>Phenylobacterium</taxon>
    </lineage>
</organism>
<reference key="1">
    <citation type="journal article" date="2008" name="BMC Genomics">
        <title>Complete genome of Phenylobacterium zucineum - a novel facultative intracellular bacterium isolated from human erythroleukemia cell line K562.</title>
        <authorList>
            <person name="Luo Y."/>
            <person name="Xu X."/>
            <person name="Ding Z."/>
            <person name="Liu Z."/>
            <person name="Zhang B."/>
            <person name="Yan Z."/>
            <person name="Sun J."/>
            <person name="Hu S."/>
            <person name="Hu X."/>
        </authorList>
    </citation>
    <scope>NUCLEOTIDE SEQUENCE [LARGE SCALE GENOMIC DNA]</scope>
    <source>
        <strain>HLK1</strain>
    </source>
</reference>
<proteinExistence type="inferred from homology"/>
<accession>B4RBP5</accession>
<evidence type="ECO:0000255" key="1">
    <source>
        <dbReference type="HAMAP-Rule" id="MF_01694"/>
    </source>
</evidence>
<evidence type="ECO:0000255" key="2">
    <source>
        <dbReference type="PROSITE-ProRule" id="PRU01266"/>
    </source>
</evidence>
<gene>
    <name evidence="1" type="primary">bioB</name>
    <name type="ordered locus">PHZ_c0091</name>
</gene>
<keyword id="KW-0001">2Fe-2S</keyword>
<keyword id="KW-0004">4Fe-4S</keyword>
<keyword id="KW-0093">Biotin biosynthesis</keyword>
<keyword id="KW-0408">Iron</keyword>
<keyword id="KW-0411">Iron-sulfur</keyword>
<keyword id="KW-0479">Metal-binding</keyword>
<keyword id="KW-1185">Reference proteome</keyword>
<keyword id="KW-0949">S-adenosyl-L-methionine</keyword>
<keyword id="KW-0808">Transferase</keyword>
<comment type="function">
    <text evidence="1">Catalyzes the conversion of dethiobiotin (DTB) to biotin by the insertion of a sulfur atom into dethiobiotin via a radical-based mechanism.</text>
</comment>
<comment type="catalytic activity">
    <reaction evidence="1">
        <text>(4R,5S)-dethiobiotin + (sulfur carrier)-SH + 2 reduced [2Fe-2S]-[ferredoxin] + 2 S-adenosyl-L-methionine = (sulfur carrier)-H + biotin + 2 5'-deoxyadenosine + 2 L-methionine + 2 oxidized [2Fe-2S]-[ferredoxin]</text>
        <dbReference type="Rhea" id="RHEA:22060"/>
        <dbReference type="Rhea" id="RHEA-COMP:10000"/>
        <dbReference type="Rhea" id="RHEA-COMP:10001"/>
        <dbReference type="Rhea" id="RHEA-COMP:14737"/>
        <dbReference type="Rhea" id="RHEA-COMP:14739"/>
        <dbReference type="ChEBI" id="CHEBI:17319"/>
        <dbReference type="ChEBI" id="CHEBI:29917"/>
        <dbReference type="ChEBI" id="CHEBI:33737"/>
        <dbReference type="ChEBI" id="CHEBI:33738"/>
        <dbReference type="ChEBI" id="CHEBI:57586"/>
        <dbReference type="ChEBI" id="CHEBI:57844"/>
        <dbReference type="ChEBI" id="CHEBI:59789"/>
        <dbReference type="ChEBI" id="CHEBI:64428"/>
        <dbReference type="ChEBI" id="CHEBI:149473"/>
        <dbReference type="EC" id="2.8.1.6"/>
    </reaction>
</comment>
<comment type="cofactor">
    <cofactor evidence="1">
        <name>[4Fe-4S] cluster</name>
        <dbReference type="ChEBI" id="CHEBI:49883"/>
    </cofactor>
    <text evidence="1">Binds 1 [4Fe-4S] cluster. The cluster is coordinated with 3 cysteines and an exchangeable S-adenosyl-L-methionine.</text>
</comment>
<comment type="cofactor">
    <cofactor evidence="1">
        <name>[2Fe-2S] cluster</name>
        <dbReference type="ChEBI" id="CHEBI:190135"/>
    </cofactor>
    <text evidence="1">Binds 1 [2Fe-2S] cluster. The cluster is coordinated with 3 cysteines and 1 arginine.</text>
</comment>
<comment type="pathway">
    <text evidence="1">Cofactor biosynthesis; biotin biosynthesis; biotin from 7,8-diaminononanoate: step 2/2.</text>
</comment>
<comment type="subunit">
    <text evidence="1">Homodimer.</text>
</comment>
<comment type="similarity">
    <text evidence="1">Belongs to the radical SAM superfamily. Biotin synthase family.</text>
</comment>
<feature type="chain" id="PRO_0000381525" description="Biotin synthase">
    <location>
        <begin position="1"/>
        <end position="331"/>
    </location>
</feature>
<feature type="domain" description="Radical SAM core" evidence="2">
    <location>
        <begin position="53"/>
        <end position="271"/>
    </location>
</feature>
<feature type="binding site" evidence="1">
    <location>
        <position position="68"/>
    </location>
    <ligand>
        <name>[4Fe-4S] cluster</name>
        <dbReference type="ChEBI" id="CHEBI:49883"/>
        <note>4Fe-4S-S-AdoMet</note>
    </ligand>
</feature>
<feature type="binding site" evidence="1">
    <location>
        <position position="72"/>
    </location>
    <ligand>
        <name>[4Fe-4S] cluster</name>
        <dbReference type="ChEBI" id="CHEBI:49883"/>
        <note>4Fe-4S-S-AdoMet</note>
    </ligand>
</feature>
<feature type="binding site" evidence="1">
    <location>
        <position position="75"/>
    </location>
    <ligand>
        <name>[4Fe-4S] cluster</name>
        <dbReference type="ChEBI" id="CHEBI:49883"/>
        <note>4Fe-4S-S-AdoMet</note>
    </ligand>
</feature>
<feature type="binding site" evidence="1">
    <location>
        <position position="112"/>
    </location>
    <ligand>
        <name>[2Fe-2S] cluster</name>
        <dbReference type="ChEBI" id="CHEBI:190135"/>
    </ligand>
</feature>
<feature type="binding site" evidence="1">
    <location>
        <position position="143"/>
    </location>
    <ligand>
        <name>[2Fe-2S] cluster</name>
        <dbReference type="ChEBI" id="CHEBI:190135"/>
    </ligand>
</feature>
<feature type="binding site" evidence="1">
    <location>
        <position position="203"/>
    </location>
    <ligand>
        <name>[2Fe-2S] cluster</name>
        <dbReference type="ChEBI" id="CHEBI:190135"/>
    </ligand>
</feature>
<feature type="binding site" evidence="1">
    <location>
        <position position="275"/>
    </location>
    <ligand>
        <name>[2Fe-2S] cluster</name>
        <dbReference type="ChEBI" id="CHEBI:190135"/>
    </ligand>
</feature>